<accession>Q2G084</accession>
<comment type="function">
    <text evidence="1">May catalyze the ATP-dependent phosphorylation of lipids other than diacylglycerol (DAG).</text>
</comment>
<comment type="cofactor">
    <cofactor evidence="1">
        <name>Mg(2+)</name>
        <dbReference type="ChEBI" id="CHEBI:18420"/>
    </cofactor>
    <text evidence="1">Binds 1 Mg(2+) ion per subunit. This ion appears to have a structural role and is required for catalytic activity.</text>
</comment>
<comment type="similarity">
    <text evidence="3">Belongs to the diacylglycerol/lipid kinase family.</text>
</comment>
<keyword id="KW-0067">ATP-binding</keyword>
<keyword id="KW-0418">Kinase</keyword>
<keyword id="KW-0444">Lipid biosynthesis</keyword>
<keyword id="KW-0443">Lipid metabolism</keyword>
<keyword id="KW-0460">Magnesium</keyword>
<keyword id="KW-0479">Metal-binding</keyword>
<keyword id="KW-0547">Nucleotide-binding</keyword>
<keyword id="KW-0594">Phospholipid biosynthesis</keyword>
<keyword id="KW-1208">Phospholipid metabolism</keyword>
<keyword id="KW-1185">Reference proteome</keyword>
<keyword id="KW-0808">Transferase</keyword>
<gene>
    <name type="ordered locus">SAOUHSC_00736</name>
</gene>
<organism>
    <name type="scientific">Staphylococcus aureus (strain NCTC 8325 / PS 47)</name>
    <dbReference type="NCBI Taxonomy" id="93061"/>
    <lineage>
        <taxon>Bacteria</taxon>
        <taxon>Bacillati</taxon>
        <taxon>Bacillota</taxon>
        <taxon>Bacilli</taxon>
        <taxon>Bacillales</taxon>
        <taxon>Staphylococcaceae</taxon>
        <taxon>Staphylococcus</taxon>
    </lineage>
</organism>
<evidence type="ECO:0000250" key="1"/>
<evidence type="ECO:0000255" key="2">
    <source>
        <dbReference type="PROSITE-ProRule" id="PRU00783"/>
    </source>
</evidence>
<evidence type="ECO:0000305" key="3"/>
<sequence>MENKYTHGVLFYHEHSGLKNINQGIGEVTTALSSICKHLSIQLSENEGDIIKYCQEIKTKNYAKDVDILFILGGDGTVNELINGVMTHDLQLPIGILPGGTFNDFTKTLNIAPNHKQASEQMISAQVGTYDVIKINNQYALNFVGLGLIVQNAENVQDGSKDIFGKLSYIGSTVKTLLNPTQFNYQLSIDDKTYSGETTMILTANGPFIGGSRIPLTDLSPQDGELNTFIFNEQSFSILNDIFKKRDSMNWNEITQGIEHIPGKKISLTTDPAMKVDIDGEISLETPIDIEVIPNAIQLLTVNDL</sequence>
<reference key="1">
    <citation type="book" date="2006" name="Gram positive pathogens, 2nd edition">
        <title>The Staphylococcus aureus NCTC 8325 genome.</title>
        <editorList>
            <person name="Fischetti V."/>
            <person name="Novick R."/>
            <person name="Ferretti J."/>
            <person name="Portnoy D."/>
            <person name="Rood J."/>
        </editorList>
        <authorList>
            <person name="Gillaspy A.F."/>
            <person name="Worrell V."/>
            <person name="Orvis J."/>
            <person name="Roe B.A."/>
            <person name="Dyer D.W."/>
            <person name="Iandolo J.J."/>
        </authorList>
    </citation>
    <scope>NUCLEOTIDE SEQUENCE [LARGE SCALE GENOMIC DNA]</scope>
    <source>
        <strain>NCTC 8325 / PS 47</strain>
    </source>
</reference>
<protein>
    <recommendedName>
        <fullName>Putative lipid kinase SAOUHSC_00736</fullName>
        <ecNumber>2.7.1.-</ecNumber>
    </recommendedName>
</protein>
<feature type="chain" id="PRO_0000386508" description="Putative lipid kinase SAOUHSC_00736">
    <location>
        <begin position="1"/>
        <end position="305"/>
    </location>
</feature>
<feature type="domain" description="DAGKc" evidence="2">
    <location>
        <begin position="3"/>
        <end position="139"/>
    </location>
</feature>
<feature type="active site" description="Proton acceptor" evidence="1">
    <location>
        <position position="281"/>
    </location>
</feature>
<feature type="binding site" evidence="2">
    <location>
        <position position="44"/>
    </location>
    <ligand>
        <name>ATP</name>
        <dbReference type="ChEBI" id="CHEBI:30616"/>
    </ligand>
</feature>
<feature type="binding site" evidence="2">
    <location>
        <begin position="74"/>
        <end position="80"/>
    </location>
    <ligand>
        <name>ATP</name>
        <dbReference type="ChEBI" id="CHEBI:30616"/>
    </ligand>
</feature>
<feature type="binding site" evidence="2">
    <location>
        <position position="101"/>
    </location>
    <ligand>
        <name>ATP</name>
        <dbReference type="ChEBI" id="CHEBI:30616"/>
    </ligand>
</feature>
<feature type="binding site" evidence="1">
    <location>
        <position position="220"/>
    </location>
    <ligand>
        <name>Mg(2+)</name>
        <dbReference type="ChEBI" id="CHEBI:18420"/>
    </ligand>
</feature>
<feature type="binding site" evidence="1">
    <location>
        <position position="223"/>
    </location>
    <ligand>
        <name>Mg(2+)</name>
        <dbReference type="ChEBI" id="CHEBI:18420"/>
    </ligand>
</feature>
<feature type="binding site" evidence="1">
    <location>
        <position position="225"/>
    </location>
    <ligand>
        <name>Mg(2+)</name>
        <dbReference type="ChEBI" id="CHEBI:18420"/>
    </ligand>
</feature>
<dbReference type="EC" id="2.7.1.-"/>
<dbReference type="EMBL" id="CP000253">
    <property type="protein sequence ID" value="ABD29869.1"/>
    <property type="molecule type" value="Genomic_DNA"/>
</dbReference>
<dbReference type="RefSeq" id="WP_000429014.1">
    <property type="nucleotide sequence ID" value="NZ_LS483365.1"/>
</dbReference>
<dbReference type="RefSeq" id="YP_499296.1">
    <property type="nucleotide sequence ID" value="NC_007795.1"/>
</dbReference>
<dbReference type="SMR" id="Q2G084"/>
<dbReference type="STRING" id="93061.SAOUHSC_00736"/>
<dbReference type="PaxDb" id="1280-SAXN108_0794"/>
<dbReference type="GeneID" id="3920981"/>
<dbReference type="KEGG" id="sao:SAOUHSC_00736"/>
<dbReference type="PATRIC" id="fig|93061.5.peg.666"/>
<dbReference type="eggNOG" id="COG1597">
    <property type="taxonomic scope" value="Bacteria"/>
</dbReference>
<dbReference type="HOGENOM" id="CLU_045532_1_0_9"/>
<dbReference type="OrthoDB" id="142078at2"/>
<dbReference type="PRO" id="PR:Q2G084"/>
<dbReference type="Proteomes" id="UP000008816">
    <property type="component" value="Chromosome"/>
</dbReference>
<dbReference type="GO" id="GO:0005524">
    <property type="term" value="F:ATP binding"/>
    <property type="evidence" value="ECO:0007669"/>
    <property type="project" value="UniProtKB-KW"/>
</dbReference>
<dbReference type="GO" id="GO:0004143">
    <property type="term" value="F:ATP-dependent diacylglycerol kinase activity"/>
    <property type="evidence" value="ECO:0000318"/>
    <property type="project" value="GO_Central"/>
</dbReference>
<dbReference type="GO" id="GO:0046872">
    <property type="term" value="F:metal ion binding"/>
    <property type="evidence" value="ECO:0007669"/>
    <property type="project" value="UniProtKB-KW"/>
</dbReference>
<dbReference type="GO" id="GO:0008654">
    <property type="term" value="P:phospholipid biosynthetic process"/>
    <property type="evidence" value="ECO:0007669"/>
    <property type="project" value="UniProtKB-KW"/>
</dbReference>
<dbReference type="Gene3D" id="2.60.200.40">
    <property type="match status" value="1"/>
</dbReference>
<dbReference type="Gene3D" id="3.40.50.10330">
    <property type="entry name" value="Probable inorganic polyphosphate/atp-NAD kinase, domain 1"/>
    <property type="match status" value="1"/>
</dbReference>
<dbReference type="InterPro" id="IPR017438">
    <property type="entry name" value="ATP-NAD_kinase_N"/>
</dbReference>
<dbReference type="InterPro" id="IPR005218">
    <property type="entry name" value="Diacylglycerol/lipid_kinase"/>
</dbReference>
<dbReference type="InterPro" id="IPR001206">
    <property type="entry name" value="Diacylglycerol_kinase_cat_dom"/>
</dbReference>
<dbReference type="InterPro" id="IPR050187">
    <property type="entry name" value="Lipid_Phosphate_FormReg"/>
</dbReference>
<dbReference type="InterPro" id="IPR016064">
    <property type="entry name" value="NAD/diacylglycerol_kinase_sf"/>
</dbReference>
<dbReference type="InterPro" id="IPR045540">
    <property type="entry name" value="YegS/DAGK_C"/>
</dbReference>
<dbReference type="NCBIfam" id="TIGR00147">
    <property type="entry name" value="YegS/Rv2252/BmrU family lipid kinase"/>
    <property type="match status" value="1"/>
</dbReference>
<dbReference type="PANTHER" id="PTHR12358:SF106">
    <property type="entry name" value="LIPID KINASE YEGS"/>
    <property type="match status" value="1"/>
</dbReference>
<dbReference type="PANTHER" id="PTHR12358">
    <property type="entry name" value="SPHINGOSINE KINASE"/>
    <property type="match status" value="1"/>
</dbReference>
<dbReference type="Pfam" id="PF00781">
    <property type="entry name" value="DAGK_cat"/>
    <property type="match status" value="1"/>
</dbReference>
<dbReference type="Pfam" id="PF19279">
    <property type="entry name" value="YegS_C"/>
    <property type="match status" value="1"/>
</dbReference>
<dbReference type="SMART" id="SM00046">
    <property type="entry name" value="DAGKc"/>
    <property type="match status" value="1"/>
</dbReference>
<dbReference type="SUPFAM" id="SSF111331">
    <property type="entry name" value="NAD kinase/diacylglycerol kinase-like"/>
    <property type="match status" value="1"/>
</dbReference>
<dbReference type="PROSITE" id="PS50146">
    <property type="entry name" value="DAGK"/>
    <property type="match status" value="1"/>
</dbReference>
<name>Y736_STAA8</name>
<proteinExistence type="inferred from homology"/>